<keyword id="KW-1185">Reference proteome</keyword>
<keyword id="KW-0687">Ribonucleoprotein</keyword>
<keyword id="KW-0689">Ribosomal protein</keyword>
<keyword id="KW-0694">RNA-binding</keyword>
<keyword id="KW-0699">rRNA-binding</keyword>
<name>RL4_RUMCH</name>
<accession>B8I7Y0</accession>
<organism>
    <name type="scientific">Ruminiclostridium cellulolyticum (strain ATCC 35319 / DSM 5812 / JCM 6584 / H10)</name>
    <name type="common">Clostridium cellulolyticum</name>
    <dbReference type="NCBI Taxonomy" id="394503"/>
    <lineage>
        <taxon>Bacteria</taxon>
        <taxon>Bacillati</taxon>
        <taxon>Bacillota</taxon>
        <taxon>Clostridia</taxon>
        <taxon>Eubacteriales</taxon>
        <taxon>Oscillospiraceae</taxon>
        <taxon>Ruminiclostridium</taxon>
    </lineage>
</organism>
<feature type="chain" id="PRO_1000165997" description="Large ribosomal subunit protein uL4">
    <location>
        <begin position="1"/>
        <end position="207"/>
    </location>
</feature>
<feature type="region of interest" description="Disordered" evidence="2">
    <location>
        <begin position="44"/>
        <end position="76"/>
    </location>
</feature>
<feature type="compositionally biased region" description="Basic residues" evidence="2">
    <location>
        <begin position="60"/>
        <end position="71"/>
    </location>
</feature>
<sequence>MPKVDLYNMKGEVVGDIQLSDNVFGTDVNKDALHAVVVNQLANRRQGTQSTKTKSEVRGGGKKPWRQKGTGRARQGSIRSAQWVKGGIVLGPKPRSYRYTLPKKVKRIAMKSALTSKVSGNEIFVLDALALDAIKTKSMVGVLNNLKVDSSALLVIDSKNENIVKSARNIPGIKTAYVNTLNVFDILKYDKFIITKDAVEKVEEVYA</sequence>
<evidence type="ECO:0000255" key="1">
    <source>
        <dbReference type="HAMAP-Rule" id="MF_01328"/>
    </source>
</evidence>
<evidence type="ECO:0000256" key="2">
    <source>
        <dbReference type="SAM" id="MobiDB-lite"/>
    </source>
</evidence>
<evidence type="ECO:0000305" key="3"/>
<proteinExistence type="inferred from homology"/>
<comment type="function">
    <text evidence="1">One of the primary rRNA binding proteins, this protein initially binds near the 5'-end of the 23S rRNA. It is important during the early stages of 50S assembly. It makes multiple contacts with different domains of the 23S rRNA in the assembled 50S subunit and ribosome.</text>
</comment>
<comment type="function">
    <text evidence="1">Forms part of the polypeptide exit tunnel.</text>
</comment>
<comment type="subunit">
    <text evidence="1">Part of the 50S ribosomal subunit.</text>
</comment>
<comment type="similarity">
    <text evidence="1">Belongs to the universal ribosomal protein uL4 family.</text>
</comment>
<gene>
    <name evidence="1" type="primary">rplD</name>
    <name type="ordered locus">Ccel_0759</name>
</gene>
<reference key="1">
    <citation type="submission" date="2009-01" db="EMBL/GenBank/DDBJ databases">
        <title>Complete sequence of Clostridium cellulolyticum H10.</title>
        <authorList>
            <consortium name="US DOE Joint Genome Institute"/>
            <person name="Lucas S."/>
            <person name="Copeland A."/>
            <person name="Lapidus A."/>
            <person name="Glavina del Rio T."/>
            <person name="Dalin E."/>
            <person name="Tice H."/>
            <person name="Bruce D."/>
            <person name="Goodwin L."/>
            <person name="Pitluck S."/>
            <person name="Chertkov O."/>
            <person name="Saunders E."/>
            <person name="Brettin T."/>
            <person name="Detter J.C."/>
            <person name="Han C."/>
            <person name="Larimer F."/>
            <person name="Land M."/>
            <person name="Hauser L."/>
            <person name="Kyrpides N."/>
            <person name="Ivanova N."/>
            <person name="Zhou J."/>
            <person name="Richardson P."/>
        </authorList>
    </citation>
    <scope>NUCLEOTIDE SEQUENCE [LARGE SCALE GENOMIC DNA]</scope>
    <source>
        <strain>ATCC 35319 / DSM 5812 / JCM 6584 / H10</strain>
    </source>
</reference>
<dbReference type="EMBL" id="CP001348">
    <property type="protein sequence ID" value="ACL75137.1"/>
    <property type="molecule type" value="Genomic_DNA"/>
</dbReference>
<dbReference type="RefSeq" id="WP_015924302.1">
    <property type="nucleotide sequence ID" value="NC_011898.1"/>
</dbReference>
<dbReference type="SMR" id="B8I7Y0"/>
<dbReference type="STRING" id="394503.Ccel_0759"/>
<dbReference type="KEGG" id="cce:Ccel_0759"/>
<dbReference type="eggNOG" id="COG0088">
    <property type="taxonomic scope" value="Bacteria"/>
</dbReference>
<dbReference type="HOGENOM" id="CLU_041575_5_2_9"/>
<dbReference type="OrthoDB" id="9803201at2"/>
<dbReference type="Proteomes" id="UP000001349">
    <property type="component" value="Chromosome"/>
</dbReference>
<dbReference type="GO" id="GO:1990904">
    <property type="term" value="C:ribonucleoprotein complex"/>
    <property type="evidence" value="ECO:0007669"/>
    <property type="project" value="UniProtKB-KW"/>
</dbReference>
<dbReference type="GO" id="GO:0005840">
    <property type="term" value="C:ribosome"/>
    <property type="evidence" value="ECO:0007669"/>
    <property type="project" value="UniProtKB-KW"/>
</dbReference>
<dbReference type="GO" id="GO:0019843">
    <property type="term" value="F:rRNA binding"/>
    <property type="evidence" value="ECO:0007669"/>
    <property type="project" value="UniProtKB-UniRule"/>
</dbReference>
<dbReference type="GO" id="GO:0003735">
    <property type="term" value="F:structural constituent of ribosome"/>
    <property type="evidence" value="ECO:0007669"/>
    <property type="project" value="InterPro"/>
</dbReference>
<dbReference type="GO" id="GO:0006412">
    <property type="term" value="P:translation"/>
    <property type="evidence" value="ECO:0007669"/>
    <property type="project" value="UniProtKB-UniRule"/>
</dbReference>
<dbReference type="Gene3D" id="3.40.1370.10">
    <property type="match status" value="1"/>
</dbReference>
<dbReference type="HAMAP" id="MF_01328_B">
    <property type="entry name" value="Ribosomal_uL4_B"/>
    <property type="match status" value="1"/>
</dbReference>
<dbReference type="InterPro" id="IPR002136">
    <property type="entry name" value="Ribosomal_uL4"/>
</dbReference>
<dbReference type="InterPro" id="IPR013005">
    <property type="entry name" value="Ribosomal_uL4-like"/>
</dbReference>
<dbReference type="InterPro" id="IPR023574">
    <property type="entry name" value="Ribosomal_uL4_dom_sf"/>
</dbReference>
<dbReference type="NCBIfam" id="TIGR03953">
    <property type="entry name" value="rplD_bact"/>
    <property type="match status" value="1"/>
</dbReference>
<dbReference type="PANTHER" id="PTHR10746">
    <property type="entry name" value="50S RIBOSOMAL PROTEIN L4"/>
    <property type="match status" value="1"/>
</dbReference>
<dbReference type="PANTHER" id="PTHR10746:SF6">
    <property type="entry name" value="LARGE RIBOSOMAL SUBUNIT PROTEIN UL4M"/>
    <property type="match status" value="1"/>
</dbReference>
<dbReference type="Pfam" id="PF00573">
    <property type="entry name" value="Ribosomal_L4"/>
    <property type="match status" value="1"/>
</dbReference>
<dbReference type="SUPFAM" id="SSF52166">
    <property type="entry name" value="Ribosomal protein L4"/>
    <property type="match status" value="1"/>
</dbReference>
<protein>
    <recommendedName>
        <fullName evidence="1">Large ribosomal subunit protein uL4</fullName>
    </recommendedName>
    <alternativeName>
        <fullName evidence="3">50S ribosomal protein L4</fullName>
    </alternativeName>
</protein>